<accession>Q1IHT1</accession>
<keyword id="KW-0665">Pyrimidine biosynthesis</keyword>
<keyword id="KW-1185">Reference proteome</keyword>
<keyword id="KW-0808">Transferase</keyword>
<evidence type="ECO:0000255" key="1">
    <source>
        <dbReference type="HAMAP-Rule" id="MF_00001"/>
    </source>
</evidence>
<name>PYRB_KORVE</name>
<proteinExistence type="inferred from homology"/>
<protein>
    <recommendedName>
        <fullName evidence="1">Aspartate carbamoyltransferase catalytic subunit</fullName>
        <ecNumber evidence="1">2.1.3.2</ecNumber>
    </recommendedName>
    <alternativeName>
        <fullName evidence="1">Aspartate transcarbamylase</fullName>
        <shortName evidence="1">ATCase</shortName>
    </alternativeName>
</protein>
<reference key="1">
    <citation type="journal article" date="2009" name="Appl. Environ. Microbiol.">
        <title>Three genomes from the phylum Acidobacteria provide insight into the lifestyles of these microorganisms in soils.</title>
        <authorList>
            <person name="Ward N.L."/>
            <person name="Challacombe J.F."/>
            <person name="Janssen P.H."/>
            <person name="Henrissat B."/>
            <person name="Coutinho P.M."/>
            <person name="Wu M."/>
            <person name="Xie G."/>
            <person name="Haft D.H."/>
            <person name="Sait M."/>
            <person name="Badger J."/>
            <person name="Barabote R.D."/>
            <person name="Bradley B."/>
            <person name="Brettin T.S."/>
            <person name="Brinkac L.M."/>
            <person name="Bruce D."/>
            <person name="Creasy T."/>
            <person name="Daugherty S.C."/>
            <person name="Davidsen T.M."/>
            <person name="DeBoy R.T."/>
            <person name="Detter J.C."/>
            <person name="Dodson R.J."/>
            <person name="Durkin A.S."/>
            <person name="Ganapathy A."/>
            <person name="Gwinn-Giglio M."/>
            <person name="Han C.S."/>
            <person name="Khouri H."/>
            <person name="Kiss H."/>
            <person name="Kothari S.P."/>
            <person name="Madupu R."/>
            <person name="Nelson K.E."/>
            <person name="Nelson W.C."/>
            <person name="Paulsen I."/>
            <person name="Penn K."/>
            <person name="Ren Q."/>
            <person name="Rosovitz M.J."/>
            <person name="Selengut J.D."/>
            <person name="Shrivastava S."/>
            <person name="Sullivan S.A."/>
            <person name="Tapia R."/>
            <person name="Thompson L.S."/>
            <person name="Watkins K.L."/>
            <person name="Yang Q."/>
            <person name="Yu C."/>
            <person name="Zafar N."/>
            <person name="Zhou L."/>
            <person name="Kuske C.R."/>
        </authorList>
    </citation>
    <scope>NUCLEOTIDE SEQUENCE [LARGE SCALE GENOMIC DNA]</scope>
    <source>
        <strain>Ellin345</strain>
    </source>
</reference>
<organism>
    <name type="scientific">Koribacter versatilis (strain Ellin345)</name>
    <dbReference type="NCBI Taxonomy" id="204669"/>
    <lineage>
        <taxon>Bacteria</taxon>
        <taxon>Pseudomonadati</taxon>
        <taxon>Acidobacteriota</taxon>
        <taxon>Terriglobia</taxon>
        <taxon>Terriglobales</taxon>
        <taxon>Candidatus Korobacteraceae</taxon>
        <taxon>Candidatus Korobacter</taxon>
    </lineage>
</organism>
<feature type="chain" id="PRO_0000321060" description="Aspartate carbamoyltransferase catalytic subunit">
    <location>
        <begin position="1"/>
        <end position="303"/>
    </location>
</feature>
<feature type="binding site" evidence="1">
    <location>
        <position position="54"/>
    </location>
    <ligand>
        <name>carbamoyl phosphate</name>
        <dbReference type="ChEBI" id="CHEBI:58228"/>
    </ligand>
</feature>
<feature type="binding site" evidence="1">
    <location>
        <position position="55"/>
    </location>
    <ligand>
        <name>carbamoyl phosphate</name>
        <dbReference type="ChEBI" id="CHEBI:58228"/>
    </ligand>
</feature>
<feature type="binding site" evidence="1">
    <location>
        <position position="82"/>
    </location>
    <ligand>
        <name>L-aspartate</name>
        <dbReference type="ChEBI" id="CHEBI:29991"/>
    </ligand>
</feature>
<feature type="binding site" evidence="1">
    <location>
        <position position="104"/>
    </location>
    <ligand>
        <name>carbamoyl phosphate</name>
        <dbReference type="ChEBI" id="CHEBI:58228"/>
    </ligand>
</feature>
<feature type="binding site" evidence="1">
    <location>
        <position position="132"/>
    </location>
    <ligand>
        <name>carbamoyl phosphate</name>
        <dbReference type="ChEBI" id="CHEBI:58228"/>
    </ligand>
</feature>
<feature type="binding site" evidence="1">
    <location>
        <position position="135"/>
    </location>
    <ligand>
        <name>carbamoyl phosphate</name>
        <dbReference type="ChEBI" id="CHEBI:58228"/>
    </ligand>
</feature>
<feature type="binding site" evidence="1">
    <location>
        <position position="165"/>
    </location>
    <ligand>
        <name>L-aspartate</name>
        <dbReference type="ChEBI" id="CHEBI:29991"/>
    </ligand>
</feature>
<feature type="binding site" evidence="1">
    <location>
        <position position="221"/>
    </location>
    <ligand>
        <name>L-aspartate</name>
        <dbReference type="ChEBI" id="CHEBI:29991"/>
    </ligand>
</feature>
<feature type="binding site" evidence="1">
    <location>
        <position position="261"/>
    </location>
    <ligand>
        <name>carbamoyl phosphate</name>
        <dbReference type="ChEBI" id="CHEBI:58228"/>
    </ligand>
</feature>
<feature type="binding site" evidence="1">
    <location>
        <position position="262"/>
    </location>
    <ligand>
        <name>carbamoyl phosphate</name>
        <dbReference type="ChEBI" id="CHEBI:58228"/>
    </ligand>
</feature>
<gene>
    <name evidence="1" type="primary">pyrB</name>
    <name type="ordered locus">Acid345_4569</name>
</gene>
<dbReference type="EC" id="2.1.3.2" evidence="1"/>
<dbReference type="EMBL" id="CP000360">
    <property type="protein sequence ID" value="ABF43569.1"/>
    <property type="molecule type" value="Genomic_DNA"/>
</dbReference>
<dbReference type="RefSeq" id="WP_011525366.1">
    <property type="nucleotide sequence ID" value="NC_008009.1"/>
</dbReference>
<dbReference type="SMR" id="Q1IHT1"/>
<dbReference type="STRING" id="204669.Acid345_4569"/>
<dbReference type="EnsemblBacteria" id="ABF43569">
    <property type="protein sequence ID" value="ABF43569"/>
    <property type="gene ID" value="Acid345_4569"/>
</dbReference>
<dbReference type="KEGG" id="aba:Acid345_4569"/>
<dbReference type="eggNOG" id="COG0540">
    <property type="taxonomic scope" value="Bacteria"/>
</dbReference>
<dbReference type="HOGENOM" id="CLU_043846_2_0_0"/>
<dbReference type="OrthoDB" id="9774690at2"/>
<dbReference type="UniPathway" id="UPA00070">
    <property type="reaction ID" value="UER00116"/>
</dbReference>
<dbReference type="Proteomes" id="UP000002432">
    <property type="component" value="Chromosome"/>
</dbReference>
<dbReference type="GO" id="GO:0005829">
    <property type="term" value="C:cytosol"/>
    <property type="evidence" value="ECO:0007669"/>
    <property type="project" value="TreeGrafter"/>
</dbReference>
<dbReference type="GO" id="GO:0016597">
    <property type="term" value="F:amino acid binding"/>
    <property type="evidence" value="ECO:0007669"/>
    <property type="project" value="InterPro"/>
</dbReference>
<dbReference type="GO" id="GO:0004070">
    <property type="term" value="F:aspartate carbamoyltransferase activity"/>
    <property type="evidence" value="ECO:0007669"/>
    <property type="project" value="UniProtKB-UniRule"/>
</dbReference>
<dbReference type="GO" id="GO:0006207">
    <property type="term" value="P:'de novo' pyrimidine nucleobase biosynthetic process"/>
    <property type="evidence" value="ECO:0007669"/>
    <property type="project" value="InterPro"/>
</dbReference>
<dbReference type="GO" id="GO:0044205">
    <property type="term" value="P:'de novo' UMP biosynthetic process"/>
    <property type="evidence" value="ECO:0007669"/>
    <property type="project" value="UniProtKB-UniRule"/>
</dbReference>
<dbReference type="GO" id="GO:0006520">
    <property type="term" value="P:amino acid metabolic process"/>
    <property type="evidence" value="ECO:0007669"/>
    <property type="project" value="InterPro"/>
</dbReference>
<dbReference type="Gene3D" id="3.40.50.1370">
    <property type="entry name" value="Aspartate/ornithine carbamoyltransferase"/>
    <property type="match status" value="2"/>
</dbReference>
<dbReference type="HAMAP" id="MF_00001">
    <property type="entry name" value="Asp_carb_tr"/>
    <property type="match status" value="1"/>
</dbReference>
<dbReference type="InterPro" id="IPR006132">
    <property type="entry name" value="Asp/Orn_carbamoyltranf_P-bd"/>
</dbReference>
<dbReference type="InterPro" id="IPR006130">
    <property type="entry name" value="Asp/Orn_carbamoylTrfase"/>
</dbReference>
<dbReference type="InterPro" id="IPR036901">
    <property type="entry name" value="Asp/Orn_carbamoylTrfase_sf"/>
</dbReference>
<dbReference type="InterPro" id="IPR002082">
    <property type="entry name" value="Asp_carbamoyltransf"/>
</dbReference>
<dbReference type="InterPro" id="IPR006131">
    <property type="entry name" value="Asp_carbamoyltransf_Asp/Orn-bd"/>
</dbReference>
<dbReference type="NCBIfam" id="TIGR00670">
    <property type="entry name" value="asp_carb_tr"/>
    <property type="match status" value="1"/>
</dbReference>
<dbReference type="NCBIfam" id="NF002032">
    <property type="entry name" value="PRK00856.1"/>
    <property type="match status" value="1"/>
</dbReference>
<dbReference type="PANTHER" id="PTHR45753:SF6">
    <property type="entry name" value="ASPARTATE CARBAMOYLTRANSFERASE"/>
    <property type="match status" value="1"/>
</dbReference>
<dbReference type="PANTHER" id="PTHR45753">
    <property type="entry name" value="ORNITHINE CARBAMOYLTRANSFERASE, MITOCHONDRIAL"/>
    <property type="match status" value="1"/>
</dbReference>
<dbReference type="Pfam" id="PF00185">
    <property type="entry name" value="OTCace"/>
    <property type="match status" value="1"/>
</dbReference>
<dbReference type="Pfam" id="PF02729">
    <property type="entry name" value="OTCace_N"/>
    <property type="match status" value="1"/>
</dbReference>
<dbReference type="PRINTS" id="PR00100">
    <property type="entry name" value="AOTCASE"/>
</dbReference>
<dbReference type="PRINTS" id="PR00101">
    <property type="entry name" value="ATCASE"/>
</dbReference>
<dbReference type="SUPFAM" id="SSF53671">
    <property type="entry name" value="Aspartate/ornithine carbamoyltransferase"/>
    <property type="match status" value="1"/>
</dbReference>
<dbReference type="PROSITE" id="PS00097">
    <property type="entry name" value="CARBAMOYLTRANSFERASE"/>
    <property type="match status" value="1"/>
</dbReference>
<sequence>MKSKKPRSLLGIEGMESKEINALLKLAARMEPTRRRNTLRGKTVVLLFYENSTRTRSSFELAAKVLGATTILITATASSIEKGESLIDTGYTVRALGADAIVMRHPSSGAHWLLAEHLDIPIINAGDGMHEHPSQGLLDALTILQAKKKFKGLKIAIVGDIYHSRVARSNVHLLPKLGAKVVLCGPPDLCPDEMAKIASGIEVSHNLDHALSGADVVMSLRVQKERLVGRQIGVEDYIANYQITPEKLALAKKDAVLMHPGPIIRGMELTSEVADGHASKILAQVHNGVKVRMAILQTLLAKN</sequence>
<comment type="function">
    <text evidence="1">Catalyzes the condensation of carbamoyl phosphate and aspartate to form carbamoyl aspartate and inorganic phosphate, the committed step in the de novo pyrimidine nucleotide biosynthesis pathway.</text>
</comment>
<comment type="catalytic activity">
    <reaction evidence="1">
        <text>carbamoyl phosphate + L-aspartate = N-carbamoyl-L-aspartate + phosphate + H(+)</text>
        <dbReference type="Rhea" id="RHEA:20013"/>
        <dbReference type="ChEBI" id="CHEBI:15378"/>
        <dbReference type="ChEBI" id="CHEBI:29991"/>
        <dbReference type="ChEBI" id="CHEBI:32814"/>
        <dbReference type="ChEBI" id="CHEBI:43474"/>
        <dbReference type="ChEBI" id="CHEBI:58228"/>
        <dbReference type="EC" id="2.1.3.2"/>
    </reaction>
</comment>
<comment type="pathway">
    <text evidence="1">Pyrimidine metabolism; UMP biosynthesis via de novo pathway; (S)-dihydroorotate from bicarbonate: step 2/3.</text>
</comment>
<comment type="subunit">
    <text evidence="1">Heterododecamer (2C3:3R2) of six catalytic PyrB chains organized as two trimers (C3), and six regulatory PyrI chains organized as three dimers (R2).</text>
</comment>
<comment type="similarity">
    <text evidence="1">Belongs to the aspartate/ornithine carbamoyltransferase superfamily. ATCase family.</text>
</comment>